<evidence type="ECO:0000250" key="1"/>
<evidence type="ECO:0000255" key="2"/>
<evidence type="ECO:0000255" key="3">
    <source>
        <dbReference type="PROSITE-ProRule" id="PRU00114"/>
    </source>
</evidence>
<evidence type="ECO:0000255" key="4">
    <source>
        <dbReference type="PROSITE-ProRule" id="PRU00160"/>
    </source>
</evidence>
<evidence type="ECO:0000255" key="5">
    <source>
        <dbReference type="PROSITE-ProRule" id="PRU00316"/>
    </source>
</evidence>
<evidence type="ECO:0000255" key="6">
    <source>
        <dbReference type="PROSITE-ProRule" id="PRU10044"/>
    </source>
</evidence>
<evidence type="ECO:0000269" key="7">
    <source>
    </source>
</evidence>
<evidence type="ECO:0000269" key="8">
    <source>
    </source>
</evidence>
<evidence type="ECO:0000303" key="9">
    <source>
    </source>
</evidence>
<evidence type="ECO:0000305" key="10"/>
<gene>
    <name type="primary">Ptp69D</name>
    <name type="synonym">DPTP</name>
    <name type="ORF">CG10975</name>
</gene>
<keyword id="KW-0025">Alternative splicing</keyword>
<keyword id="KW-0130">Cell adhesion</keyword>
<keyword id="KW-1015">Disulfide bond</keyword>
<keyword id="KW-0325">Glycoprotein</keyword>
<keyword id="KW-0378">Hydrolase</keyword>
<keyword id="KW-0393">Immunoglobulin domain</keyword>
<keyword id="KW-0472">Membrane</keyword>
<keyword id="KW-0904">Protein phosphatase</keyword>
<keyword id="KW-0675">Receptor</keyword>
<keyword id="KW-1185">Reference proteome</keyword>
<keyword id="KW-0677">Repeat</keyword>
<keyword id="KW-0732">Signal</keyword>
<keyword id="KW-0812">Transmembrane</keyword>
<keyword id="KW-1133">Transmembrane helix</keyword>
<comment type="function">
    <text>Possible cell adhesion receptor.</text>
</comment>
<comment type="catalytic activity">
    <reaction evidence="6 8">
        <text>O-phospho-L-tyrosyl-[protein] + H2O = L-tyrosyl-[protein] + phosphate</text>
        <dbReference type="Rhea" id="RHEA:10684"/>
        <dbReference type="Rhea" id="RHEA-COMP:10136"/>
        <dbReference type="Rhea" id="RHEA-COMP:20101"/>
        <dbReference type="ChEBI" id="CHEBI:15377"/>
        <dbReference type="ChEBI" id="CHEBI:43474"/>
        <dbReference type="ChEBI" id="CHEBI:46858"/>
        <dbReference type="ChEBI" id="CHEBI:61978"/>
        <dbReference type="EC" id="3.1.3.48"/>
    </reaction>
</comment>
<comment type="subcellular location">
    <subcellularLocation>
        <location>Membrane</location>
        <topology>Single-pass type I membrane protein</topology>
    </subcellularLocation>
</comment>
<comment type="alternative products">
    <event type="alternative splicing"/>
    <isoform>
        <id>P16620-1</id>
        <name>A</name>
        <sequence type="displayed"/>
    </isoform>
    <isoform>
        <id>P16620-2</id>
        <name>B</name>
        <sequence type="described" ref="VSP_015257"/>
    </isoform>
</comment>
<comment type="similarity">
    <text evidence="10">Belongs to the protein-tyrosine phosphatase family. Receptor class subfamily.</text>
</comment>
<dbReference type="EC" id="3.1.3.48"/>
<dbReference type="EMBL" id="M27699">
    <property type="protein sequence ID" value="AAA28842.1"/>
    <property type="molecule type" value="mRNA"/>
</dbReference>
<dbReference type="EMBL" id="AE014296">
    <property type="protein sequence ID" value="AAF49892.2"/>
    <property type="molecule type" value="Genomic_DNA"/>
</dbReference>
<dbReference type="EMBL" id="AE014296">
    <property type="protein sequence ID" value="AAO41254.1"/>
    <property type="molecule type" value="Genomic_DNA"/>
</dbReference>
<dbReference type="EMBL" id="BT001531">
    <property type="protein sequence ID" value="AAN71286.1"/>
    <property type="molecule type" value="mRNA"/>
</dbReference>
<dbReference type="PIR" id="B36182">
    <property type="entry name" value="B36182"/>
</dbReference>
<dbReference type="RefSeq" id="NP_524048.2">
    <molecule id="P16620-1"/>
    <property type="nucleotide sequence ID" value="NM_079324.3"/>
</dbReference>
<dbReference type="RefSeq" id="NP_788502.1">
    <molecule id="P16620-2"/>
    <property type="nucleotide sequence ID" value="NM_176324.2"/>
</dbReference>
<dbReference type="SMR" id="P16620"/>
<dbReference type="BioGRID" id="64791">
    <property type="interactions" value="12"/>
</dbReference>
<dbReference type="FunCoup" id="P16620">
    <property type="interactions" value="74"/>
</dbReference>
<dbReference type="IntAct" id="P16620">
    <property type="interactions" value="10"/>
</dbReference>
<dbReference type="MINT" id="P16620"/>
<dbReference type="STRING" id="7227.FBpp0075645"/>
<dbReference type="GlyCosmos" id="P16620">
    <property type="glycosylation" value="20 sites, No reported glycans"/>
</dbReference>
<dbReference type="GlyGen" id="P16620">
    <property type="glycosylation" value="20 sites"/>
</dbReference>
<dbReference type="iPTMnet" id="P16620"/>
<dbReference type="PaxDb" id="7227-FBpp0075645"/>
<dbReference type="EnsemblMetazoa" id="FBtr0075913">
    <molecule id="P16620-1"/>
    <property type="protein sequence ID" value="FBpp0075645"/>
    <property type="gene ID" value="FBgn0014007"/>
</dbReference>
<dbReference type="EnsemblMetazoa" id="FBtr0075914">
    <molecule id="P16620-2"/>
    <property type="protein sequence ID" value="FBpp0075646"/>
    <property type="gene ID" value="FBgn0014007"/>
</dbReference>
<dbReference type="GeneID" id="39443"/>
<dbReference type="KEGG" id="dme:Dmel_CG10975"/>
<dbReference type="AGR" id="FB:FBgn0014007"/>
<dbReference type="CTD" id="39443"/>
<dbReference type="FlyBase" id="FBgn0014007">
    <property type="gene designation" value="Ptp69D"/>
</dbReference>
<dbReference type="VEuPathDB" id="VectorBase:FBgn0014007"/>
<dbReference type="eggNOG" id="KOG4228">
    <property type="taxonomic scope" value="Eukaryota"/>
</dbReference>
<dbReference type="GeneTree" id="ENSGT00940000174163"/>
<dbReference type="InParanoid" id="P16620"/>
<dbReference type="OMA" id="FQVRACS"/>
<dbReference type="OrthoDB" id="6058203at2759"/>
<dbReference type="PhylomeDB" id="P16620"/>
<dbReference type="SignaLink" id="P16620"/>
<dbReference type="BioGRID-ORCS" id="39443">
    <property type="hits" value="0 hits in 1 CRISPR screen"/>
</dbReference>
<dbReference type="GenomeRNAi" id="39443"/>
<dbReference type="PRO" id="PR:P16620"/>
<dbReference type="Proteomes" id="UP000000803">
    <property type="component" value="Chromosome 3L"/>
</dbReference>
<dbReference type="Bgee" id="FBgn0014007">
    <property type="expression patterns" value="Expressed in dorsal appendage forming follicle cell in ovary and 146 other cell types or tissues"/>
</dbReference>
<dbReference type="ExpressionAtlas" id="P16620">
    <property type="expression patterns" value="baseline and differential"/>
</dbReference>
<dbReference type="GO" id="GO:0030424">
    <property type="term" value="C:axon"/>
    <property type="evidence" value="ECO:0000314"/>
    <property type="project" value="FlyBase"/>
</dbReference>
<dbReference type="GO" id="GO:0009986">
    <property type="term" value="C:cell surface"/>
    <property type="evidence" value="ECO:0000314"/>
    <property type="project" value="FlyBase"/>
</dbReference>
<dbReference type="GO" id="GO:0005886">
    <property type="term" value="C:plasma membrane"/>
    <property type="evidence" value="ECO:0007005"/>
    <property type="project" value="FlyBase"/>
</dbReference>
<dbReference type="GO" id="GO:0004725">
    <property type="term" value="F:protein tyrosine phosphatase activity"/>
    <property type="evidence" value="ECO:0000318"/>
    <property type="project" value="GO_Central"/>
</dbReference>
<dbReference type="GO" id="GO:0005001">
    <property type="term" value="F:transmembrane receptor protein tyrosine phosphatase activity"/>
    <property type="evidence" value="ECO:0000314"/>
    <property type="project" value="FlyBase"/>
</dbReference>
<dbReference type="GO" id="GO:0007411">
    <property type="term" value="P:axon guidance"/>
    <property type="evidence" value="ECO:0000316"/>
    <property type="project" value="FlyBase"/>
</dbReference>
<dbReference type="GO" id="GO:0007155">
    <property type="term" value="P:cell adhesion"/>
    <property type="evidence" value="ECO:0007669"/>
    <property type="project" value="UniProtKB-KW"/>
</dbReference>
<dbReference type="GO" id="GO:0007415">
    <property type="term" value="P:defasciculation of motor neuron axon"/>
    <property type="evidence" value="ECO:0000315"/>
    <property type="project" value="FlyBase"/>
</dbReference>
<dbReference type="GO" id="GO:0048813">
    <property type="term" value="P:dendrite morphogenesis"/>
    <property type="evidence" value="ECO:0000315"/>
    <property type="project" value="FlyBase"/>
</dbReference>
<dbReference type="GO" id="GO:0097155">
    <property type="term" value="P:fasciculation of sensory neuron axon"/>
    <property type="evidence" value="ECO:0000315"/>
    <property type="project" value="FlyBase"/>
</dbReference>
<dbReference type="GO" id="GO:0008045">
    <property type="term" value="P:motor neuron axon guidance"/>
    <property type="evidence" value="ECO:0000315"/>
    <property type="project" value="FlyBase"/>
</dbReference>
<dbReference type="GO" id="GO:0031175">
    <property type="term" value="P:neuron projection development"/>
    <property type="evidence" value="ECO:0000318"/>
    <property type="project" value="GO_Central"/>
</dbReference>
<dbReference type="GO" id="GO:0007165">
    <property type="term" value="P:signal transduction"/>
    <property type="evidence" value="ECO:0000318"/>
    <property type="project" value="GO_Central"/>
</dbReference>
<dbReference type="GO" id="GO:0016201">
    <property type="term" value="P:synaptic target inhibition"/>
    <property type="evidence" value="ECO:0000315"/>
    <property type="project" value="FlyBase"/>
</dbReference>
<dbReference type="CDD" id="cd00063">
    <property type="entry name" value="FN3"/>
    <property type="match status" value="3"/>
</dbReference>
<dbReference type="CDD" id="cd00096">
    <property type="entry name" value="Ig"/>
    <property type="match status" value="1"/>
</dbReference>
<dbReference type="CDD" id="cd00047">
    <property type="entry name" value="PTPc"/>
    <property type="match status" value="2"/>
</dbReference>
<dbReference type="FunFam" id="2.60.40.10:FF:001818">
    <property type="entry name" value="Tyrosine-protein phosphatase 69D"/>
    <property type="match status" value="1"/>
</dbReference>
<dbReference type="FunFam" id="2.60.40.10:FF:002129">
    <property type="entry name" value="Tyrosine-protein phosphatase 69D"/>
    <property type="match status" value="1"/>
</dbReference>
<dbReference type="FunFam" id="3.90.190.10:FF:000092">
    <property type="entry name" value="Tyrosine-protein phosphatase 69D"/>
    <property type="match status" value="1"/>
</dbReference>
<dbReference type="FunFam" id="3.90.190.10:FF:000096">
    <property type="entry name" value="Tyrosine-protein phosphatase 69D"/>
    <property type="match status" value="1"/>
</dbReference>
<dbReference type="Gene3D" id="2.60.40.10">
    <property type="entry name" value="Immunoglobulins"/>
    <property type="match status" value="5"/>
</dbReference>
<dbReference type="Gene3D" id="3.90.190.10">
    <property type="entry name" value="Protein tyrosine phosphatase superfamily"/>
    <property type="match status" value="2"/>
</dbReference>
<dbReference type="InterPro" id="IPR003961">
    <property type="entry name" value="FN3_dom"/>
</dbReference>
<dbReference type="InterPro" id="IPR036116">
    <property type="entry name" value="FN3_sf"/>
</dbReference>
<dbReference type="InterPro" id="IPR007110">
    <property type="entry name" value="Ig-like_dom"/>
</dbReference>
<dbReference type="InterPro" id="IPR036179">
    <property type="entry name" value="Ig-like_dom_sf"/>
</dbReference>
<dbReference type="InterPro" id="IPR013783">
    <property type="entry name" value="Ig-like_fold"/>
</dbReference>
<dbReference type="InterPro" id="IPR003599">
    <property type="entry name" value="Ig_sub"/>
</dbReference>
<dbReference type="InterPro" id="IPR003598">
    <property type="entry name" value="Ig_sub2"/>
</dbReference>
<dbReference type="InterPro" id="IPR029021">
    <property type="entry name" value="Prot-tyrosine_phosphatase-like"/>
</dbReference>
<dbReference type="InterPro" id="IPR050348">
    <property type="entry name" value="Protein-Tyr_Phosphatase"/>
</dbReference>
<dbReference type="InterPro" id="IPR000242">
    <property type="entry name" value="PTP_cat"/>
</dbReference>
<dbReference type="InterPro" id="IPR016130">
    <property type="entry name" value="Tyr_Pase_AS"/>
</dbReference>
<dbReference type="InterPro" id="IPR003595">
    <property type="entry name" value="Tyr_Pase_cat"/>
</dbReference>
<dbReference type="InterPro" id="IPR000387">
    <property type="entry name" value="Tyr_Pase_dom"/>
</dbReference>
<dbReference type="PANTHER" id="PTHR19134">
    <property type="entry name" value="RECEPTOR-TYPE TYROSINE-PROTEIN PHOSPHATASE"/>
    <property type="match status" value="1"/>
</dbReference>
<dbReference type="PANTHER" id="PTHR19134:SF495">
    <property type="entry name" value="TYROSINE-PROTEIN PHOSPHATASE 69D"/>
    <property type="match status" value="1"/>
</dbReference>
<dbReference type="Pfam" id="PF00041">
    <property type="entry name" value="fn3"/>
    <property type="match status" value="2"/>
</dbReference>
<dbReference type="Pfam" id="PF00102">
    <property type="entry name" value="Y_phosphatase"/>
    <property type="match status" value="2"/>
</dbReference>
<dbReference type="PRINTS" id="PR00700">
    <property type="entry name" value="PRTYPHPHTASE"/>
</dbReference>
<dbReference type="SMART" id="SM00060">
    <property type="entry name" value="FN3"/>
    <property type="match status" value="3"/>
</dbReference>
<dbReference type="SMART" id="SM00409">
    <property type="entry name" value="IG"/>
    <property type="match status" value="2"/>
</dbReference>
<dbReference type="SMART" id="SM00408">
    <property type="entry name" value="IGc2"/>
    <property type="match status" value="2"/>
</dbReference>
<dbReference type="SMART" id="SM00194">
    <property type="entry name" value="PTPc"/>
    <property type="match status" value="2"/>
</dbReference>
<dbReference type="SMART" id="SM00404">
    <property type="entry name" value="PTPc_motif"/>
    <property type="match status" value="2"/>
</dbReference>
<dbReference type="SUPFAM" id="SSF52799">
    <property type="entry name" value="(Phosphotyrosine protein) phosphatases II"/>
    <property type="match status" value="2"/>
</dbReference>
<dbReference type="SUPFAM" id="SSF49265">
    <property type="entry name" value="Fibronectin type III"/>
    <property type="match status" value="2"/>
</dbReference>
<dbReference type="SUPFAM" id="SSF48726">
    <property type="entry name" value="Immunoglobulin"/>
    <property type="match status" value="2"/>
</dbReference>
<dbReference type="PROSITE" id="PS50853">
    <property type="entry name" value="FN3"/>
    <property type="match status" value="3"/>
</dbReference>
<dbReference type="PROSITE" id="PS50835">
    <property type="entry name" value="IG_LIKE"/>
    <property type="match status" value="2"/>
</dbReference>
<dbReference type="PROSITE" id="PS00383">
    <property type="entry name" value="TYR_PHOSPHATASE_1"/>
    <property type="match status" value="2"/>
</dbReference>
<dbReference type="PROSITE" id="PS50056">
    <property type="entry name" value="TYR_PHOSPHATASE_2"/>
    <property type="match status" value="2"/>
</dbReference>
<dbReference type="PROSITE" id="PS50055">
    <property type="entry name" value="TYR_PHOSPHATASE_PTP"/>
    <property type="match status" value="2"/>
</dbReference>
<proteinExistence type="evidence at protein level"/>
<accession>P16620</accession>
<accession>Q8IGY3</accession>
<accession>Q9VU03</accession>
<name>PTP69_DROME</name>
<sequence length="1462" mass="167460">MALLYRRMSMLLNIILAYIFLCAICVQGSVKQEWAEIGKNVSLECASENEAVAWKLGNQTINKNHTRYKIRTEPLKSNDDGSENNDSQDFIKYKNVLALLDVNIKDSGNYTCTAQTGQNHSTEFQVRPYLPSKVLQSTPDRIKRKIKQDVMLYCLIEMYPQNETTNRNLKWLKDGSQFEFLDTFSSISKLNDTHLNFTLEFTEVYKKENGTYKCTVFDDTGLEITSKEITLFVMEVPQVSIDFAKAVGANKIYLNWTVNDGNDPIQKFFITLQEAGTPTFTYHKDFINGSHTSYILDHFKPNTTYFLRIVGKNSIGNGQPTQYPQGITTLSYDPIFIPKVETTGSTASTITIGWNPPPPDLIDYIQYYELIVSESGEVPKVIEEAIYQQNSRNLPYMFDKLKTATDYEFRVRACSDLTKTCGPWSENVNGTTMDGVATKPTNLSIQCHHDNVTRGNSIAINWDVPKTPNGKVVSYLIHLLGNPMSTVDREMWGPKIRRIDEPHHKTLYESVSPNTNYTVTVSAITRHKKNGEPATGSCLMPVSTPDAIGRTMWSKVNLDSKYVLKLYLPKISERNGPICCYRLYLVRINNDNKELPDPEKLNIATYQEVHSDNVTRSSAYIAEMISSKYFRPEIFLGDEKRFSENNDIIRDNDEICRKCLEGTPFLRKPEIIHIPPQGSLSNSDSELPILSEKDNLIKGANLTEHALKILESKLRDKRNAVTSDENPILSAVNPNVPLHDSSRDVFDGEIDINSNYTGFLEIIVRDRNNALMAYSKYFDIITPATEAEPIQSLNNMDYYLSIGVKAGAVLLGVILVFIVLWVFHHKKTKNELQGEDTLTLRDSLSRALFGRRNHNHSHFITSGNHKGFDAGPIHRLDLENAYKNRHKDTDYGFLREYEMLPNRFSDRTTKNSDLKENACKNRYPDIKAYDQTRVKLAVINGLQTTDYINANFVIGYKERKKFICAQGPMESTIDDFWRMIWEQHLEIIVMLTNLEEYNKAKCAKYWPEKVFDTKQFGDILVKFAQERKTGDYIERTLNVSKNKANVGEEEDRRQITQYHYLTWKDFMAPEHPHGIIKFIRQINSVYSLQRGPILVHCSAGVGRTGTLVALDSLIQQLEEEDSVSIYNTVCDLRHQRNFLVQSLKQYIFLYRALLDTGTFGNTDICIDTMASAIESLKRKPNEGKCKLEVEFEKLLATADEISKSCSVGENEENNMKNRSQEIIPYDRNRVILTPLPMRENSTYINASFIEGYDNSETFIIAQDPLENTIGDFWRMISEQSVTTLVMISEIGDGPRKCPRYWADDEVQYDHILVKYVHSESCPYYTRREFYVTNCKIDDTLKVTQFQYNGWPTVDGEVPEVCRGIIELVDQAYNHYKNNKNSGCRSPLTVHCSLGTDRSSIFVAMCILVQHLRLEKCVDICATTRKLRSQRTGLINSYAQYEFLHRAIINYSDLHHIAESTLD</sequence>
<protein>
    <recommendedName>
        <fullName>Tyrosine-protein phosphatase 69D</fullName>
        <ecNumber>3.1.3.48</ecNumber>
    </recommendedName>
    <alternativeName>
        <fullName>Protein-tyrosine-phosphate phosphohydrolase</fullName>
        <shortName>DPTP</shortName>
    </alternativeName>
</protein>
<organism>
    <name type="scientific">Drosophila melanogaster</name>
    <name type="common">Fruit fly</name>
    <dbReference type="NCBI Taxonomy" id="7227"/>
    <lineage>
        <taxon>Eukaryota</taxon>
        <taxon>Metazoa</taxon>
        <taxon>Ecdysozoa</taxon>
        <taxon>Arthropoda</taxon>
        <taxon>Hexapoda</taxon>
        <taxon>Insecta</taxon>
        <taxon>Pterygota</taxon>
        <taxon>Neoptera</taxon>
        <taxon>Endopterygota</taxon>
        <taxon>Diptera</taxon>
        <taxon>Brachycera</taxon>
        <taxon>Muscomorpha</taxon>
        <taxon>Ephydroidea</taxon>
        <taxon>Drosophilidae</taxon>
        <taxon>Drosophila</taxon>
        <taxon>Sophophora</taxon>
    </lineage>
</organism>
<feature type="signal peptide" evidence="2">
    <location>
        <begin position="1"/>
        <end position="28"/>
    </location>
</feature>
<feature type="chain" id="PRO_0000025428" description="Tyrosine-protein phosphatase 69D">
    <location>
        <begin position="29"/>
        <end position="1462"/>
    </location>
</feature>
<feature type="topological domain" description="Extracellular" evidence="2">
    <location>
        <begin position="29"/>
        <end position="805"/>
    </location>
</feature>
<feature type="transmembrane region" description="Helical" evidence="2">
    <location>
        <begin position="806"/>
        <end position="823"/>
    </location>
</feature>
<feature type="topological domain" description="Cytoplasmic" evidence="2">
    <location>
        <begin position="824"/>
        <end position="1462"/>
    </location>
</feature>
<feature type="domain" description="Ig-like C2-type 1">
    <location>
        <begin position="29"/>
        <end position="125"/>
    </location>
</feature>
<feature type="domain" description="Ig-like C2-type 2">
    <location>
        <begin position="131"/>
        <end position="230"/>
    </location>
</feature>
<feature type="domain" description="Fibronectin type-III 1" evidence="5">
    <location>
        <begin position="237"/>
        <end position="332"/>
    </location>
</feature>
<feature type="domain" description="Fibronectin type-III 2" evidence="5">
    <location>
        <begin position="334"/>
        <end position="435"/>
    </location>
</feature>
<feature type="domain" description="Fibronectin type-III 3" evidence="5">
    <location>
        <begin position="439"/>
        <end position="547"/>
    </location>
</feature>
<feature type="domain" description="Tyrosine-protein phosphatase 1" evidence="4">
    <location>
        <begin position="893"/>
        <end position="1156"/>
    </location>
</feature>
<feature type="domain" description="Tyrosine-protein phosphatase 2" evidence="4">
    <location>
        <begin position="1187"/>
        <end position="1450"/>
    </location>
</feature>
<feature type="active site" description="Phosphocysteine intermediate" evidence="1">
    <location>
        <position position="1097"/>
    </location>
</feature>
<feature type="active site" description="Phosphocysteine intermediate" evidence="1">
    <location>
        <position position="1391"/>
    </location>
</feature>
<feature type="glycosylation site" description="N-linked (GlcNAc...) asparagine" evidence="2">
    <location>
        <position position="40"/>
    </location>
</feature>
<feature type="glycosylation site" description="N-linked (GlcNAc...) asparagine" evidence="7">
    <location>
        <position position="58"/>
    </location>
</feature>
<feature type="glycosylation site" description="N-linked (GlcNAc...) asparagine" evidence="2">
    <location>
        <position position="64"/>
    </location>
</feature>
<feature type="glycosylation site" description="N-linked (GlcNAc...) asparagine" evidence="2">
    <location>
        <position position="85"/>
    </location>
</feature>
<feature type="glycosylation site" description="N-linked (GlcNAc...) asparagine" evidence="2">
    <location>
        <position position="109"/>
    </location>
</feature>
<feature type="glycosylation site" description="N-linked (GlcNAc...) asparagine" evidence="2">
    <location>
        <position position="119"/>
    </location>
</feature>
<feature type="glycosylation site" description="N-linked (GlcNAc...) asparagine" evidence="2">
    <location>
        <position position="162"/>
    </location>
</feature>
<feature type="glycosylation site" description="N-linked (GlcNAc...) asparagine" evidence="2">
    <location>
        <position position="191"/>
    </location>
</feature>
<feature type="glycosylation site" description="N-linked (GlcNAc...) asparagine" evidence="2">
    <location>
        <position position="196"/>
    </location>
</feature>
<feature type="glycosylation site" description="N-linked (GlcNAc...) asparagine" evidence="2">
    <location>
        <position position="209"/>
    </location>
</feature>
<feature type="glycosylation site" description="N-linked (GlcNAc...) asparagine" evidence="2">
    <location>
        <position position="255"/>
    </location>
</feature>
<feature type="glycosylation site" description="N-linked (GlcNAc...) asparagine" evidence="2">
    <location>
        <position position="288"/>
    </location>
</feature>
<feature type="glycosylation site" description="N-linked (GlcNAc...) asparagine" evidence="2">
    <location>
        <position position="302"/>
    </location>
</feature>
<feature type="glycosylation site" description="N-linked (GlcNAc...) asparagine" evidence="2">
    <location>
        <position position="429"/>
    </location>
</feature>
<feature type="glycosylation site" description="N-linked (GlcNAc...) asparagine" evidence="2">
    <location>
        <position position="442"/>
    </location>
</feature>
<feature type="glycosylation site" description="N-linked (GlcNAc...) asparagine" evidence="2">
    <location>
        <position position="451"/>
    </location>
</feature>
<feature type="glycosylation site" description="N-linked (GlcNAc...) asparagine" evidence="2">
    <location>
        <position position="516"/>
    </location>
</feature>
<feature type="glycosylation site" description="N-linked (GlcNAc...) asparagine" evidence="7">
    <location>
        <position position="613"/>
    </location>
</feature>
<feature type="glycosylation site" description="N-linked (GlcNAc...) asparagine" evidence="7">
    <location>
        <position position="701"/>
    </location>
</feature>
<feature type="glycosylation site" description="N-linked (GlcNAc...) asparagine" evidence="2">
    <location>
        <position position="755"/>
    </location>
</feature>
<feature type="disulfide bond" evidence="3">
    <location>
        <begin position="45"/>
        <end position="112"/>
    </location>
</feature>
<feature type="disulfide bond" evidence="3">
    <location>
        <begin position="154"/>
        <end position="214"/>
    </location>
</feature>
<feature type="splice variant" id="VSP_015257" description="In isoform B." evidence="9">
    <location>
        <position position="845"/>
    </location>
</feature>
<feature type="sequence conflict" description="In Ref. 1; AAA28842." evidence="10" ref="1">
    <original>I</original>
    <variation>M</variation>
    <location>
        <position position="91"/>
    </location>
</feature>
<feature type="sequence conflict" description="In Ref. 1; AAA28842." evidence="10" ref="1">
    <original>A</original>
    <variation>T</variation>
    <location>
        <position position="98"/>
    </location>
</feature>
<feature type="sequence conflict" description="In Ref. 1; AAA28842." evidence="10" ref="1">
    <original>K</original>
    <variation>N</variation>
    <location>
        <position position="105"/>
    </location>
</feature>
<feature type="sequence conflict" description="In Ref. 1; AAA28842." evidence="10" ref="1">
    <original>R</original>
    <variation>K</variation>
    <location>
        <position position="127"/>
    </location>
</feature>
<feature type="sequence conflict" description="In Ref. 1; AAA28842." evidence="10" ref="1">
    <original>D</original>
    <variation>A</variation>
    <location>
        <position position="638"/>
    </location>
</feature>
<feature type="sequence conflict" description="In Ref. 1; AAA28842." evidence="10" ref="1">
    <original>D</original>
    <variation>G</variation>
    <location>
        <position position="651"/>
    </location>
</feature>
<feature type="sequence conflict" description="In Ref. 1; AAA28842." evidence="10" ref="1">
    <original>M</original>
    <variation>I</variation>
    <location>
        <position position="990"/>
    </location>
</feature>
<feature type="sequence conflict" description="In Ref. 1; AAA28842." evidence="10" ref="1">
    <original>V</original>
    <variation>M</variation>
    <location>
        <position position="1189"/>
    </location>
</feature>
<feature type="sequence conflict" description="In Ref. 1; AAA28842." evidence="10" ref="1">
    <original>L</original>
    <variation>F</variation>
    <location>
        <position position="1265"/>
    </location>
</feature>
<reference key="1">
    <citation type="journal article" date="1989" name="Proc. Natl. Acad. Sci. U.S.A.">
        <title>A family of receptor-linked protein tyrosine phosphatases in humans and Drosophila.</title>
        <authorList>
            <person name="Streuli M."/>
            <person name="Krueger N.X."/>
            <person name="Tsai A.Y.M."/>
            <person name="Saito H."/>
        </authorList>
    </citation>
    <scope>NUCLEOTIDE SEQUENCE [MRNA] (ISOFORM A)</scope>
    <scope>POSSIBLE FUNCTION</scope>
    <scope>CATALYTIC ACTIVITY</scope>
</reference>
<reference key="2">
    <citation type="journal article" date="2000" name="Science">
        <title>The genome sequence of Drosophila melanogaster.</title>
        <authorList>
            <person name="Adams M.D."/>
            <person name="Celniker S.E."/>
            <person name="Holt R.A."/>
            <person name="Evans C.A."/>
            <person name="Gocayne J.D."/>
            <person name="Amanatides P.G."/>
            <person name="Scherer S.E."/>
            <person name="Li P.W."/>
            <person name="Hoskins R.A."/>
            <person name="Galle R.F."/>
            <person name="George R.A."/>
            <person name="Lewis S.E."/>
            <person name="Richards S."/>
            <person name="Ashburner M."/>
            <person name="Henderson S.N."/>
            <person name="Sutton G.G."/>
            <person name="Wortman J.R."/>
            <person name="Yandell M.D."/>
            <person name="Zhang Q."/>
            <person name="Chen L.X."/>
            <person name="Brandon R.C."/>
            <person name="Rogers Y.-H.C."/>
            <person name="Blazej R.G."/>
            <person name="Champe M."/>
            <person name="Pfeiffer B.D."/>
            <person name="Wan K.H."/>
            <person name="Doyle C."/>
            <person name="Baxter E.G."/>
            <person name="Helt G."/>
            <person name="Nelson C.R."/>
            <person name="Miklos G.L.G."/>
            <person name="Abril J.F."/>
            <person name="Agbayani A."/>
            <person name="An H.-J."/>
            <person name="Andrews-Pfannkoch C."/>
            <person name="Baldwin D."/>
            <person name="Ballew R.M."/>
            <person name="Basu A."/>
            <person name="Baxendale J."/>
            <person name="Bayraktaroglu L."/>
            <person name="Beasley E.M."/>
            <person name="Beeson K.Y."/>
            <person name="Benos P.V."/>
            <person name="Berman B.P."/>
            <person name="Bhandari D."/>
            <person name="Bolshakov S."/>
            <person name="Borkova D."/>
            <person name="Botchan M.R."/>
            <person name="Bouck J."/>
            <person name="Brokstein P."/>
            <person name="Brottier P."/>
            <person name="Burtis K.C."/>
            <person name="Busam D.A."/>
            <person name="Butler H."/>
            <person name="Cadieu E."/>
            <person name="Center A."/>
            <person name="Chandra I."/>
            <person name="Cherry J.M."/>
            <person name="Cawley S."/>
            <person name="Dahlke C."/>
            <person name="Davenport L.B."/>
            <person name="Davies P."/>
            <person name="de Pablos B."/>
            <person name="Delcher A."/>
            <person name="Deng Z."/>
            <person name="Mays A.D."/>
            <person name="Dew I."/>
            <person name="Dietz S.M."/>
            <person name="Dodson K."/>
            <person name="Doup L.E."/>
            <person name="Downes M."/>
            <person name="Dugan-Rocha S."/>
            <person name="Dunkov B.C."/>
            <person name="Dunn P."/>
            <person name="Durbin K.J."/>
            <person name="Evangelista C.C."/>
            <person name="Ferraz C."/>
            <person name="Ferriera S."/>
            <person name="Fleischmann W."/>
            <person name="Fosler C."/>
            <person name="Gabrielian A.E."/>
            <person name="Garg N.S."/>
            <person name="Gelbart W.M."/>
            <person name="Glasser K."/>
            <person name="Glodek A."/>
            <person name="Gong F."/>
            <person name="Gorrell J.H."/>
            <person name="Gu Z."/>
            <person name="Guan P."/>
            <person name="Harris M."/>
            <person name="Harris N.L."/>
            <person name="Harvey D.A."/>
            <person name="Heiman T.J."/>
            <person name="Hernandez J.R."/>
            <person name="Houck J."/>
            <person name="Hostin D."/>
            <person name="Houston K.A."/>
            <person name="Howland T.J."/>
            <person name="Wei M.-H."/>
            <person name="Ibegwam C."/>
            <person name="Jalali M."/>
            <person name="Kalush F."/>
            <person name="Karpen G.H."/>
            <person name="Ke Z."/>
            <person name="Kennison J.A."/>
            <person name="Ketchum K.A."/>
            <person name="Kimmel B.E."/>
            <person name="Kodira C.D."/>
            <person name="Kraft C.L."/>
            <person name="Kravitz S."/>
            <person name="Kulp D."/>
            <person name="Lai Z."/>
            <person name="Lasko P."/>
            <person name="Lei Y."/>
            <person name="Levitsky A.A."/>
            <person name="Li J.H."/>
            <person name="Li Z."/>
            <person name="Liang Y."/>
            <person name="Lin X."/>
            <person name="Liu X."/>
            <person name="Mattei B."/>
            <person name="McIntosh T.C."/>
            <person name="McLeod M.P."/>
            <person name="McPherson D."/>
            <person name="Merkulov G."/>
            <person name="Milshina N.V."/>
            <person name="Mobarry C."/>
            <person name="Morris J."/>
            <person name="Moshrefi A."/>
            <person name="Mount S.M."/>
            <person name="Moy M."/>
            <person name="Murphy B."/>
            <person name="Murphy L."/>
            <person name="Muzny D.M."/>
            <person name="Nelson D.L."/>
            <person name="Nelson D.R."/>
            <person name="Nelson K.A."/>
            <person name="Nixon K."/>
            <person name="Nusskern D.R."/>
            <person name="Pacleb J.M."/>
            <person name="Palazzolo M."/>
            <person name="Pittman G.S."/>
            <person name="Pan S."/>
            <person name="Pollard J."/>
            <person name="Puri V."/>
            <person name="Reese M.G."/>
            <person name="Reinert K."/>
            <person name="Remington K."/>
            <person name="Saunders R.D.C."/>
            <person name="Scheeler F."/>
            <person name="Shen H."/>
            <person name="Shue B.C."/>
            <person name="Siden-Kiamos I."/>
            <person name="Simpson M."/>
            <person name="Skupski M.P."/>
            <person name="Smith T.J."/>
            <person name="Spier E."/>
            <person name="Spradling A.C."/>
            <person name="Stapleton M."/>
            <person name="Strong R."/>
            <person name="Sun E."/>
            <person name="Svirskas R."/>
            <person name="Tector C."/>
            <person name="Turner R."/>
            <person name="Venter E."/>
            <person name="Wang A.H."/>
            <person name="Wang X."/>
            <person name="Wang Z.-Y."/>
            <person name="Wassarman D.A."/>
            <person name="Weinstock G.M."/>
            <person name="Weissenbach J."/>
            <person name="Williams S.M."/>
            <person name="Woodage T."/>
            <person name="Worley K.C."/>
            <person name="Wu D."/>
            <person name="Yang S."/>
            <person name="Yao Q.A."/>
            <person name="Ye J."/>
            <person name="Yeh R.-F."/>
            <person name="Zaveri J.S."/>
            <person name="Zhan M."/>
            <person name="Zhang G."/>
            <person name="Zhao Q."/>
            <person name="Zheng L."/>
            <person name="Zheng X.H."/>
            <person name="Zhong F.N."/>
            <person name="Zhong W."/>
            <person name="Zhou X."/>
            <person name="Zhu S.C."/>
            <person name="Zhu X."/>
            <person name="Smith H.O."/>
            <person name="Gibbs R.A."/>
            <person name="Myers E.W."/>
            <person name="Rubin G.M."/>
            <person name="Venter J.C."/>
        </authorList>
    </citation>
    <scope>NUCLEOTIDE SEQUENCE [LARGE SCALE GENOMIC DNA]</scope>
    <source>
        <strain>Berkeley</strain>
    </source>
</reference>
<reference key="3">
    <citation type="journal article" date="2002" name="Genome Biol.">
        <title>Annotation of the Drosophila melanogaster euchromatic genome: a systematic review.</title>
        <authorList>
            <person name="Misra S."/>
            <person name="Crosby M.A."/>
            <person name="Mungall C.J."/>
            <person name="Matthews B.B."/>
            <person name="Campbell K.S."/>
            <person name="Hradecky P."/>
            <person name="Huang Y."/>
            <person name="Kaminker J.S."/>
            <person name="Millburn G.H."/>
            <person name="Prochnik S.E."/>
            <person name="Smith C.D."/>
            <person name="Tupy J.L."/>
            <person name="Whitfield E.J."/>
            <person name="Bayraktaroglu L."/>
            <person name="Berman B.P."/>
            <person name="Bettencourt B.R."/>
            <person name="Celniker S.E."/>
            <person name="de Grey A.D.N.J."/>
            <person name="Drysdale R.A."/>
            <person name="Harris N.L."/>
            <person name="Richter J."/>
            <person name="Russo S."/>
            <person name="Schroeder A.J."/>
            <person name="Shu S.Q."/>
            <person name="Stapleton M."/>
            <person name="Yamada C."/>
            <person name="Ashburner M."/>
            <person name="Gelbart W.M."/>
            <person name="Rubin G.M."/>
            <person name="Lewis S.E."/>
        </authorList>
    </citation>
    <scope>GENOME REANNOTATION</scope>
    <scope>ALTERNATIVE SPLICING</scope>
    <source>
        <strain>Berkeley</strain>
    </source>
</reference>
<reference key="4">
    <citation type="journal article" date="2002" name="Genome Biol.">
        <title>A Drosophila full-length cDNA resource.</title>
        <authorList>
            <person name="Stapleton M."/>
            <person name="Carlson J.W."/>
            <person name="Brokstein P."/>
            <person name="Yu C."/>
            <person name="Champe M."/>
            <person name="George R.A."/>
            <person name="Guarin H."/>
            <person name="Kronmiller B."/>
            <person name="Pacleb J.M."/>
            <person name="Park S."/>
            <person name="Wan K.H."/>
            <person name="Rubin G.M."/>
            <person name="Celniker S.E."/>
        </authorList>
    </citation>
    <scope>NUCLEOTIDE SEQUENCE [LARGE SCALE MRNA] (ISOFORM B)</scope>
    <source>
        <strain>Berkeley</strain>
        <tissue>Embryo</tissue>
    </source>
</reference>
<reference key="5">
    <citation type="journal article" date="2009" name="Nat. Biotechnol.">
        <title>Mass-spectrometric identification and relative quantification of N-linked cell surface glycoproteins.</title>
        <authorList>
            <person name="Wollscheid B."/>
            <person name="Bausch-Fluck D."/>
            <person name="Henderson C."/>
            <person name="O'Brien R."/>
            <person name="Bibel M."/>
            <person name="Schiess R."/>
            <person name="Aebersold R."/>
            <person name="Watts J.D."/>
        </authorList>
    </citation>
    <scope>GLYCOSYLATION [LARGE SCALE ANALYSIS] AT ASN-58; ASN-613 AND ASN-701</scope>
    <scope>IDENTIFICATION BY MASS SPECTROMETRY</scope>
</reference>